<reference key="1">
    <citation type="journal article" date="2000" name="AIDS Res. Hum. Retroviruses">
        <title>Near-full-length genome sequencing of divergent African HIV type 1 subtype F viruses leads to the identification of a new HIV type 1 subtype designated K.</title>
        <authorList>
            <person name="Triques K."/>
            <person name="Bourgeois A."/>
            <person name="Vidale N."/>
            <person name="Mpoudi-Ngole E."/>
            <person name="Mulanga-Kabeya C."/>
            <person name="Nzilambi N."/>
            <person name="Torimiro N."/>
            <person name="Saman E."/>
            <person name="Delaporte E."/>
            <person name="Peeters M."/>
        </authorList>
    </citation>
    <scope>NUCLEOTIDE SEQUENCE [GENOMIC RNA]</scope>
</reference>
<protein>
    <recommendedName>
        <fullName evidence="1">Protein Vpr</fullName>
    </recommendedName>
    <alternativeName>
        <fullName evidence="1">R ORF protein</fullName>
    </alternativeName>
    <alternativeName>
        <fullName evidence="1">Viral protein R</fullName>
    </alternativeName>
</protein>
<proteinExistence type="inferred from homology"/>
<dbReference type="EMBL" id="AJ249237">
    <property type="status" value="NOT_ANNOTATED_CDS"/>
    <property type="molecule type" value="Genomic_RNA"/>
</dbReference>
<dbReference type="SMR" id="P0C1P5"/>
<dbReference type="Proteomes" id="UP000121652">
    <property type="component" value="Segment"/>
</dbReference>
<dbReference type="GO" id="GO:0043657">
    <property type="term" value="C:host cell"/>
    <property type="evidence" value="ECO:0007669"/>
    <property type="project" value="GOC"/>
</dbReference>
<dbReference type="GO" id="GO:0042025">
    <property type="term" value="C:host cell nucleus"/>
    <property type="evidence" value="ECO:0007669"/>
    <property type="project" value="UniProtKB-SubCell"/>
</dbReference>
<dbReference type="GO" id="GO:0043655">
    <property type="term" value="C:host extracellular space"/>
    <property type="evidence" value="ECO:0007669"/>
    <property type="project" value="UniProtKB-SubCell"/>
</dbReference>
<dbReference type="GO" id="GO:0044423">
    <property type="term" value="C:virion component"/>
    <property type="evidence" value="ECO:0007669"/>
    <property type="project" value="UniProtKB-UniRule"/>
</dbReference>
<dbReference type="GO" id="GO:0006351">
    <property type="term" value="P:DNA-templated transcription"/>
    <property type="evidence" value="ECO:0007669"/>
    <property type="project" value="UniProtKB-UniRule"/>
</dbReference>
<dbReference type="GO" id="GO:0034220">
    <property type="term" value="P:monoatomic ion transmembrane transport"/>
    <property type="evidence" value="ECO:0007669"/>
    <property type="project" value="UniProtKB-KW"/>
</dbReference>
<dbReference type="GO" id="GO:0051260">
    <property type="term" value="P:protein homooligomerization"/>
    <property type="evidence" value="ECO:0007669"/>
    <property type="project" value="UniProtKB-UniRule"/>
</dbReference>
<dbReference type="GO" id="GO:0006355">
    <property type="term" value="P:regulation of DNA-templated transcription"/>
    <property type="evidence" value="ECO:0007669"/>
    <property type="project" value="UniProtKB-UniRule"/>
</dbReference>
<dbReference type="GO" id="GO:0046718">
    <property type="term" value="P:symbiont entry into host cell"/>
    <property type="evidence" value="ECO:0007669"/>
    <property type="project" value="UniProtKB-KW"/>
</dbReference>
<dbReference type="GO" id="GO:0052151">
    <property type="term" value="P:symbiont-mediated activation of host apoptosis"/>
    <property type="evidence" value="ECO:0007669"/>
    <property type="project" value="UniProtKB-UniRule"/>
</dbReference>
<dbReference type="GO" id="GO:0039592">
    <property type="term" value="P:symbiont-mediated arrest of host cell cycle during G2/M transition"/>
    <property type="evidence" value="ECO:0007669"/>
    <property type="project" value="UniProtKB-UniRule"/>
</dbReference>
<dbReference type="GO" id="GO:0075732">
    <property type="term" value="P:viral penetration into host nucleus"/>
    <property type="evidence" value="ECO:0007669"/>
    <property type="project" value="UniProtKB-UniRule"/>
</dbReference>
<dbReference type="Gene3D" id="6.10.210.10">
    <property type="match status" value="1"/>
</dbReference>
<dbReference type="Gene3D" id="1.20.5.90">
    <property type="entry name" value="VpR/VpX protein, C-terminal domain"/>
    <property type="match status" value="1"/>
</dbReference>
<dbReference type="HAMAP" id="MF_04080">
    <property type="entry name" value="HIV_VPR"/>
    <property type="match status" value="1"/>
</dbReference>
<dbReference type="InterPro" id="IPR000012">
    <property type="entry name" value="RetroV_VpR/X"/>
</dbReference>
<dbReference type="Pfam" id="PF00522">
    <property type="entry name" value="VPR"/>
    <property type="match status" value="1"/>
</dbReference>
<dbReference type="PRINTS" id="PR00444">
    <property type="entry name" value="HIVVPRVPX"/>
</dbReference>
<organismHost>
    <name type="scientific">Homo sapiens</name>
    <name type="common">Human</name>
    <dbReference type="NCBI Taxonomy" id="9606"/>
</organismHost>
<name>VPR_HV1M2</name>
<evidence type="ECO:0000255" key="1">
    <source>
        <dbReference type="HAMAP-Rule" id="MF_04080"/>
    </source>
</evidence>
<accession>P0C1P5</accession>
<feature type="chain" id="PRO_0000246760" description="Protein Vpr">
    <location>
        <begin position="1"/>
        <end position="96"/>
    </location>
</feature>
<feature type="region of interest" description="Homooligomerization" evidence="1">
    <location>
        <begin position="1"/>
        <end position="42"/>
    </location>
</feature>
<feature type="modified residue" description="Phosphoserine; by host" evidence="1">
    <location>
        <position position="79"/>
    </location>
</feature>
<feature type="modified residue" description="Phosphoserine; by host" evidence="1">
    <location>
        <position position="96"/>
    </location>
</feature>
<comment type="function">
    <text evidence="1">During virus replication, may deplete host UNG protein, and incude G2-M cell cycle arrest. Acts by targeting specific host proteins for degradation by the 26S proteasome, through association with the cellular CUL4A-DDB1 E3 ligase complex by direct interaction with host VPRPB/DCAF-1. Cell cycle arrest reportedly occurs within hours of infection and is not blocked by antiviral agents, suggesting that it is initiated by the VPR carried into the virion. Additionally, VPR induces apoptosis in a cell cycle dependent manner suggesting that these two effects are mechanistically linked. Detected in the serum and cerebrospinal fluid of AIDS patient, VPR may also induce cell death to bystander cells.</text>
</comment>
<comment type="function">
    <text evidence="1">During virus entry, plays a role in the transport of the viral pre-integration (PIC) complex to the host nucleus. This function is crucial for viral infection of non-dividing macrophages. May act directly at the nuclear pore complex, by binding nucleoporins phenylalanine-glycine (FG)-repeat regions.</text>
</comment>
<comment type="subunit">
    <text evidence="1">Homooligomer, may form homodimer. Interacts with p6-gag region of the Pr55 Gag precursor protein through a (Leu-X-X)4 motif near the C-terminus of the P6gag protein. Interacts with host UNG. May interact with host RAD23A/HHR23A. Interacts with host VPRBP/DCAF1, leading to hijack the CUL4A-RBX1-DDB1-DCAF1/VPRBP complex, mediating ubiquitination of host proteins such as TERT and ZGPAT and arrest of the cell cycle in G2 phase.</text>
</comment>
<comment type="subcellular location">
    <subcellularLocation>
        <location evidence="1">Virion</location>
    </subcellularLocation>
    <subcellularLocation>
        <location evidence="1">Host nucleus</location>
    </subcellularLocation>
    <subcellularLocation>
        <location evidence="1">Host extracellular space</location>
    </subcellularLocation>
    <text evidence="1">Incorporation into virion is dependent on p6 GAG sequences. Lacks a canonical nuclear localization signal, thus import into nucleus may function independently of the human importin pathway. Detected in high quantity in the serum and cerebrospinal fluid of AIDS patient.</text>
</comment>
<comment type="PTM">
    <text evidence="1">Phosphorylated on several residues by host. These phosphorylations regulate VPR activity for the nuclear import of the HIV-1 pre-integration complex.</text>
</comment>
<comment type="miscellaneous">
    <text evidence="1">HIV-1 lineages are divided in three main groups, M (for Major), O (for Outlier), and N (for New, or Non-M, Non-O). The vast majority of strains found worldwide belong to the group M. Group O seems to be endemic to and largely confined to Cameroon and neighboring countries in West Central Africa, where these viruses represent a small minority of HIV-1 strains. The group N is represented by a limited number of isolates from Cameroonian persons. The group M is further subdivided in 9 clades or subtypes (A to D, F to H, J and K).</text>
</comment>
<comment type="similarity">
    <text evidence="1">Belongs to the HIV-1 VPR protein family.</text>
</comment>
<organism>
    <name type="scientific">Human immunodeficiency virus type 1 group M subtype F2 (isolate MP257)</name>
    <name type="common">HIV-1</name>
    <dbReference type="NCBI Taxonomy" id="388823"/>
    <lineage>
        <taxon>Viruses</taxon>
        <taxon>Riboviria</taxon>
        <taxon>Pararnavirae</taxon>
        <taxon>Artverviricota</taxon>
        <taxon>Revtraviricetes</taxon>
        <taxon>Ortervirales</taxon>
        <taxon>Retroviridae</taxon>
        <taxon>Orthoretrovirinae</taxon>
        <taxon>Lentivirus</taxon>
        <taxon>Human immunodeficiency virus type 1</taxon>
    </lineage>
</organism>
<keyword id="KW-0010">Activator</keyword>
<keyword id="KW-0014">AIDS</keyword>
<keyword id="KW-0053">Apoptosis</keyword>
<keyword id="KW-0131">Cell cycle</keyword>
<keyword id="KW-1079">Host G2/M cell cycle arrest by virus</keyword>
<keyword id="KW-1048">Host nucleus</keyword>
<keyword id="KW-0945">Host-virus interaction</keyword>
<keyword id="KW-0407">Ion channel</keyword>
<keyword id="KW-0406">Ion transport</keyword>
<keyword id="KW-1121">Modulation of host cell cycle by virus</keyword>
<keyword id="KW-0597">Phosphoprotein</keyword>
<keyword id="KW-0804">Transcription</keyword>
<keyword id="KW-0805">Transcription regulation</keyword>
<keyword id="KW-0813">Transport</keyword>
<keyword id="KW-1163">Viral penetration into host nucleus</keyword>
<keyword id="KW-0946">Virion</keyword>
<keyword id="KW-1160">Virus entry into host cell</keyword>
<sequence>MEQPPEDQGPQREPYNEWTLELLEELKHEAVRHFPREWLHGLGQHIYNTYGDTWEGVEAIIRILQQLLFIHFRIGCHHSRIGIIRQRRIRNGSGRS</sequence>
<gene>
    <name evidence="1" type="primary">vpr</name>
</gene>